<organism>
    <name type="scientific">Mus musculus</name>
    <name type="common">Mouse</name>
    <dbReference type="NCBI Taxonomy" id="10090"/>
    <lineage>
        <taxon>Eukaryota</taxon>
        <taxon>Metazoa</taxon>
        <taxon>Chordata</taxon>
        <taxon>Craniata</taxon>
        <taxon>Vertebrata</taxon>
        <taxon>Euteleostomi</taxon>
        <taxon>Mammalia</taxon>
        <taxon>Eutheria</taxon>
        <taxon>Euarchontoglires</taxon>
        <taxon>Glires</taxon>
        <taxon>Rodentia</taxon>
        <taxon>Myomorpha</taxon>
        <taxon>Muroidea</taxon>
        <taxon>Muridae</taxon>
        <taxon>Murinae</taxon>
        <taxon>Mus</taxon>
        <taxon>Mus</taxon>
    </lineage>
</organism>
<sequence>MAHSACGFSVALLGALLLGTARLLRGTEASEIALPQRSGVTVSIKLGNPALPVKICYIVMSRQHITELIIRPGERKSFTFSCSNPEKHFVLKIEKNIDCMSGPCPFGEVHLQPSTSELPILNRTFIWDVRAHKSIGLELQFATPRLRQIGPGESCADGVTHSISGHIDATEVRIGTFCSNGTVSRIKMQEGVKMALHLPWFHRRNVSGFSIANRSSIKRLCIIESVFEGEGSATLMSANYPGGFPEDELMTWQFVVPAHLRASVSFLNFNVSNCERKEERVEYYIPGSTTNPEVFRLEDKQPGNMAGNFNLSLQGCDQDAQSPGILRLQFQVLVQRPQDESNKTYMVDLSRERTMSLTIEPRPVKHGRRFVPGCFVCLESRTCSTNVTLTAGSIHKISFLCDDLTRLWVNVEKTLSCLDHRYCYRQSFKLQVPDYILQLPVQLHDFSWKLLVPKDKLSLMLVPGQKLQQHTQERPCNTSFGYHVTSTTPGQDLYFGSFCSGGSIEKIQVKQNSSVTLRAYAPSFQQEVSKQGLIVSYTPYFKEEGIFTVTPDTKNKVYLRSPNWDRGLPALSSVSWNISVPSNQVACLTVLKERSGLACQSGRAFMIIQEQQSRAEEIFSLEEEVLPKPSFHHHSFWVNISNCSPMNGKQLDLLFWVTLTPRTVDLAVVIGAAGGGALLLFALVLIICFVKKKKKVDKGPAVGIYNGNVNTQMPQTQKFPKGRKDNDSHVYAVIEDTMVYGHLLQDSGGSFIQPEVDTYRPFQGPMGDCPPTPPPLFSRTPTAKFTAEELAPSSPPESESEPYTFSHPNKGEIGVRETDIPLLHTQGPVETEE</sequence>
<reference key="1">
    <citation type="journal article" date="2004" name="Genome Res.">
        <title>The status, quality, and expansion of the NIH full-length cDNA project: the Mammalian Gene Collection (MGC).</title>
        <authorList>
            <consortium name="The MGC Project Team"/>
        </authorList>
    </citation>
    <scope>NUCLEOTIDE SEQUENCE [LARGE SCALE MRNA]</scope>
    <source>
        <strain>FVB/N</strain>
        <tissue>Mammary tumor</tissue>
        <tissue>Pancreas</tissue>
    </source>
</reference>
<keyword id="KW-1003">Cell membrane</keyword>
<keyword id="KW-1015">Disulfide bond</keyword>
<keyword id="KW-0325">Glycoprotein</keyword>
<keyword id="KW-0472">Membrane</keyword>
<keyword id="KW-0597">Phosphoprotein</keyword>
<keyword id="KW-1185">Reference proteome</keyword>
<keyword id="KW-0732">Signal</keyword>
<keyword id="KW-0812">Transmembrane</keyword>
<keyword id="KW-1133">Transmembrane helix</keyword>
<protein>
    <recommendedName>
        <fullName>CUB domain-containing protein 1</fullName>
    </recommendedName>
    <alternativeName>
        <fullName>Membrane glycoprotein gp140</fullName>
    </alternativeName>
    <alternativeName>
        <fullName>Transmembrane and associated with src kinases</fullName>
    </alternativeName>
    <cdAntigenName>CD318</cdAntigenName>
</protein>
<gene>
    <name type="primary">Cdcp1</name>
</gene>
<comment type="function">
    <text>May be involved in cell adhesion and cell matrix association. May play a role in the regulation of anchorage versus migration or proliferation versus differentiation via its phosphorylation. May be a novel marker for leukemia diagnosis and for immature hematopoietic stem cell subsets. Belongs to the tetraspanin web involved in tumor progression and metastasis.</text>
</comment>
<comment type="subunit">
    <text evidence="1">Interacts with CDH2/N-cadherin, CDH3/P-cadherin, SDC1/syndecan-1, SDC4/syndecan-4 and the serine protease ST14/MT-SP1. Also interacts SRC and PRKCG/protein kinase C gamma (By similarity).</text>
</comment>
<comment type="subcellular location">
    <subcellularLocation>
        <location evidence="5">Cell membrane</location>
        <topology evidence="5">Single-pass membrane protein</topology>
    </subcellularLocation>
    <text evidence="1">Its shedding may lead to a soluble peptide.</text>
</comment>
<comment type="PTM">
    <text evidence="1">Phosphorylated on tyrosine by kinases of the SRC family such as SRC and YES as well as by the protein kinase C gamma/PRKCG. Dephosphorylated by phosphotyrosine phosphatases. Also phosphorylated by suramin, a heparin analog. Tyrosine phosphorylated in response to dissociation of integrin alpha-6 beta-4 from laminin-5 (By similarity).</text>
</comment>
<comment type="PTM">
    <text evidence="1">N-glycosylated.</text>
</comment>
<comment type="PTM">
    <text evidence="1">A soluble form may also be produced by proteolytic cleavage at the cell surface (shedding). Another peptide of 80 kDa (p80) is present in cultured keratinocytes probably due to tryptic cleavage at an unidentified site on the N-terminal side. Converted to p80 by plasmin, a trypsin-like protease (By similarity).</text>
</comment>
<name>CDCP1_MOUSE</name>
<accession>Q5U462</accession>
<accession>Q810J0</accession>
<accession>Q921M9</accession>
<proteinExistence type="evidence at transcript level"/>
<evidence type="ECO:0000250" key="1"/>
<evidence type="ECO:0000250" key="2">
    <source>
        <dbReference type="UniProtKB" id="Q9H5V8"/>
    </source>
</evidence>
<evidence type="ECO:0000255" key="3"/>
<evidence type="ECO:0000256" key="4">
    <source>
        <dbReference type="SAM" id="MobiDB-lite"/>
    </source>
</evidence>
<evidence type="ECO:0000305" key="5"/>
<dbReference type="EMBL" id="BC011340">
    <property type="protein sequence ID" value="AAH11340.1"/>
    <property type="molecule type" value="mRNA"/>
</dbReference>
<dbReference type="EMBL" id="BC050137">
    <property type="protein sequence ID" value="AAH50137.1"/>
    <property type="molecule type" value="mRNA"/>
</dbReference>
<dbReference type="EMBL" id="BC085253">
    <property type="protein sequence ID" value="AAH85253.1"/>
    <property type="molecule type" value="mRNA"/>
</dbReference>
<dbReference type="CCDS" id="CCDS23657.1"/>
<dbReference type="RefSeq" id="NP_598735.2">
    <property type="nucleotide sequence ID" value="NM_133974.3"/>
</dbReference>
<dbReference type="FunCoup" id="Q5U462">
    <property type="interactions" value="74"/>
</dbReference>
<dbReference type="IntAct" id="Q5U462">
    <property type="interactions" value="1"/>
</dbReference>
<dbReference type="STRING" id="10090.ENSMUSP00000042057"/>
<dbReference type="GlyCosmos" id="Q5U462">
    <property type="glycosylation" value="7 sites, No reported glycans"/>
</dbReference>
<dbReference type="GlyGen" id="Q5U462">
    <property type="glycosylation" value="9 sites, 6 N-linked glycans (7 sites)"/>
</dbReference>
<dbReference type="iPTMnet" id="Q5U462"/>
<dbReference type="PhosphoSitePlus" id="Q5U462"/>
<dbReference type="jPOST" id="Q5U462"/>
<dbReference type="PaxDb" id="10090-ENSMUSP00000042057"/>
<dbReference type="PeptideAtlas" id="Q5U462"/>
<dbReference type="ProteomicsDB" id="281280"/>
<dbReference type="Antibodypedia" id="2564">
    <property type="antibodies" value="920 antibodies from 43 providers"/>
</dbReference>
<dbReference type="DNASU" id="109332"/>
<dbReference type="Ensembl" id="ENSMUST00000039229.8">
    <property type="protein sequence ID" value="ENSMUSP00000042057.8"/>
    <property type="gene ID" value="ENSMUSG00000035498.11"/>
</dbReference>
<dbReference type="GeneID" id="109332"/>
<dbReference type="KEGG" id="mmu:109332"/>
<dbReference type="UCSC" id="uc009sfz.1">
    <property type="organism name" value="mouse"/>
</dbReference>
<dbReference type="AGR" id="MGI:2442010"/>
<dbReference type="CTD" id="64866"/>
<dbReference type="MGI" id="MGI:2442010">
    <property type="gene designation" value="Cdcp1"/>
</dbReference>
<dbReference type="VEuPathDB" id="HostDB:ENSMUSG00000035498"/>
<dbReference type="eggNOG" id="ENOG502QVKN">
    <property type="taxonomic scope" value="Eukaryota"/>
</dbReference>
<dbReference type="GeneTree" id="ENSGT00390000010209"/>
<dbReference type="HOGENOM" id="CLU_007498_0_0_1"/>
<dbReference type="InParanoid" id="Q5U462"/>
<dbReference type="OMA" id="IACETGR"/>
<dbReference type="OrthoDB" id="8960034at2759"/>
<dbReference type="PhylomeDB" id="Q5U462"/>
<dbReference type="TreeFam" id="TF331392"/>
<dbReference type="BioGRID-ORCS" id="109332">
    <property type="hits" value="2 hits in 78 CRISPR screens"/>
</dbReference>
<dbReference type="PRO" id="PR:Q5U462"/>
<dbReference type="Proteomes" id="UP000000589">
    <property type="component" value="Chromosome 9"/>
</dbReference>
<dbReference type="RNAct" id="Q5U462">
    <property type="molecule type" value="protein"/>
</dbReference>
<dbReference type="Bgee" id="ENSMUSG00000035498">
    <property type="expression patterns" value="Expressed in paneth cell and 142 other cell types or tissues"/>
</dbReference>
<dbReference type="GO" id="GO:0005886">
    <property type="term" value="C:plasma membrane"/>
    <property type="evidence" value="ECO:0007669"/>
    <property type="project" value="UniProtKB-SubCell"/>
</dbReference>
<dbReference type="InterPro" id="IPR038811">
    <property type="entry name" value="CDCP1"/>
</dbReference>
<dbReference type="InterPro" id="IPR056266">
    <property type="entry name" value="CDCP1_CUB_3rd_6th"/>
</dbReference>
<dbReference type="InterPro" id="IPR056268">
    <property type="entry name" value="CUB_CDCP1_1st"/>
</dbReference>
<dbReference type="InterPro" id="IPR056269">
    <property type="entry name" value="CUB_CDCP1_2nd_5th"/>
</dbReference>
<dbReference type="InterPro" id="IPR056965">
    <property type="entry name" value="CUB_CDCP1_4th"/>
</dbReference>
<dbReference type="InterPro" id="IPR035914">
    <property type="entry name" value="Sperma_CUB_dom_sf"/>
</dbReference>
<dbReference type="PANTHER" id="PTHR14477">
    <property type="entry name" value="CUB DOMAIN-CONTAINING PROTEIN 1"/>
    <property type="match status" value="1"/>
</dbReference>
<dbReference type="PANTHER" id="PTHR14477:SF1">
    <property type="entry name" value="CUB DOMAIN-CONTAINING PROTEIN 1"/>
    <property type="match status" value="1"/>
</dbReference>
<dbReference type="Pfam" id="PF23665">
    <property type="entry name" value="CDCP1_CUB_6"/>
    <property type="match status" value="2"/>
</dbReference>
<dbReference type="Pfam" id="PF23667">
    <property type="entry name" value="CUB_CDCP1_1"/>
    <property type="match status" value="1"/>
</dbReference>
<dbReference type="Pfam" id="PF23668">
    <property type="entry name" value="CUB_CDCP1_2"/>
    <property type="match status" value="2"/>
</dbReference>
<dbReference type="Pfam" id="PF25142">
    <property type="entry name" value="CUB_CDCP1_4th"/>
    <property type="match status" value="1"/>
</dbReference>
<dbReference type="SUPFAM" id="SSF49854">
    <property type="entry name" value="Spermadhesin, CUB domain"/>
    <property type="match status" value="1"/>
</dbReference>
<feature type="signal peptide" evidence="3">
    <location>
        <begin position="1"/>
        <end position="29"/>
    </location>
</feature>
<feature type="chain" id="PRO_0000226250" description="CUB domain-containing protein 1">
    <location>
        <begin position="30"/>
        <end position="833"/>
    </location>
</feature>
<feature type="topological domain" description="Extracellular" evidence="3">
    <location>
        <begin position="30"/>
        <end position="666"/>
    </location>
</feature>
<feature type="transmembrane region" description="Helical" evidence="3">
    <location>
        <begin position="667"/>
        <end position="687"/>
    </location>
</feature>
<feature type="topological domain" description="Cytoplasmic" evidence="3">
    <location>
        <begin position="688"/>
        <end position="833"/>
    </location>
</feature>
<feature type="domain" description="CUB">
    <location>
        <begin position="417"/>
        <end position="540"/>
    </location>
</feature>
<feature type="region of interest" description="Disordered" evidence="4">
    <location>
        <begin position="783"/>
        <end position="833"/>
    </location>
</feature>
<feature type="compositionally biased region" description="Basic and acidic residues" evidence="4">
    <location>
        <begin position="809"/>
        <end position="819"/>
    </location>
</feature>
<feature type="site" description="Cleavage; by ST14/MT-SP1" evidence="1">
    <location>
        <begin position="368"/>
        <end position="369"/>
    </location>
</feature>
<feature type="modified residue" description="Phosphotyrosine" evidence="2">
    <location>
        <position position="731"/>
    </location>
</feature>
<feature type="glycosylation site" description="N-linked (GlcNAc...) asparagine" evidence="3">
    <location>
        <position position="122"/>
    </location>
</feature>
<feature type="glycosylation site" description="N-linked (GlcNAc...) asparagine" evidence="3">
    <location>
        <position position="180"/>
    </location>
</feature>
<feature type="glycosylation site" description="N-linked (GlcNAc...) asparagine" evidence="3">
    <location>
        <position position="205"/>
    </location>
</feature>
<feature type="glycosylation site" description="N-linked (GlcNAc...) asparagine" evidence="3">
    <location>
        <position position="270"/>
    </location>
</feature>
<feature type="glycosylation site" description="N-linked (GlcNAc...) asparagine" evidence="3">
    <location>
        <position position="310"/>
    </location>
</feature>
<feature type="glycosylation site" description="N-linked (GlcNAc...) asparagine" evidence="3">
    <location>
        <position position="342"/>
    </location>
</feature>
<feature type="glycosylation site" description="N-linked (GlcNAc...) asparagine" evidence="3">
    <location>
        <position position="386"/>
    </location>
</feature>
<feature type="disulfide bond" evidence="1">
    <location>
        <begin position="476"/>
        <end position="499"/>
    </location>
</feature>